<feature type="chain" id="PRO_0000254919" description="Cytochrome c oxidase subunit 2">
    <location>
        <begin position="1"/>
        <end position="227"/>
    </location>
</feature>
<feature type="topological domain" description="Mitochondrial intermembrane" evidence="4">
    <location>
        <begin position="1"/>
        <end position="14"/>
    </location>
</feature>
<feature type="transmembrane region" description="Helical; Name=I" evidence="4">
    <location>
        <begin position="15"/>
        <end position="45"/>
    </location>
</feature>
<feature type="topological domain" description="Mitochondrial matrix" evidence="4">
    <location>
        <begin position="46"/>
        <end position="59"/>
    </location>
</feature>
<feature type="transmembrane region" description="Helical; Name=II" evidence="4">
    <location>
        <begin position="60"/>
        <end position="87"/>
    </location>
</feature>
<feature type="topological domain" description="Mitochondrial intermembrane" evidence="4">
    <location>
        <begin position="88"/>
        <end position="227"/>
    </location>
</feature>
<feature type="binding site" evidence="4">
    <location>
        <position position="161"/>
    </location>
    <ligand>
        <name>Cu cation</name>
        <dbReference type="ChEBI" id="CHEBI:23378"/>
        <label>A1</label>
    </ligand>
</feature>
<feature type="binding site" evidence="4">
    <location>
        <position position="196"/>
    </location>
    <ligand>
        <name>Cu cation</name>
        <dbReference type="ChEBI" id="CHEBI:23378"/>
        <label>A1</label>
    </ligand>
</feature>
<feature type="binding site" evidence="4">
    <location>
        <position position="196"/>
    </location>
    <ligand>
        <name>Cu cation</name>
        <dbReference type="ChEBI" id="CHEBI:23378"/>
        <label>A2</label>
    </ligand>
</feature>
<feature type="binding site" evidence="4">
    <location>
        <position position="198"/>
    </location>
    <ligand>
        <name>Cu cation</name>
        <dbReference type="ChEBI" id="CHEBI:23378"/>
        <label>A2</label>
    </ligand>
</feature>
<feature type="binding site" evidence="4">
    <location>
        <position position="198"/>
    </location>
    <ligand>
        <name>Mg(2+)</name>
        <dbReference type="ChEBI" id="CHEBI:18420"/>
        <note>ligand shared with MT-CO1</note>
    </ligand>
</feature>
<feature type="binding site" evidence="4">
    <location>
        <position position="200"/>
    </location>
    <ligand>
        <name>Cu cation</name>
        <dbReference type="ChEBI" id="CHEBI:23378"/>
        <label>A1</label>
    </ligand>
</feature>
<feature type="binding site" evidence="4">
    <location>
        <position position="200"/>
    </location>
    <ligand>
        <name>Cu cation</name>
        <dbReference type="ChEBI" id="CHEBI:23378"/>
        <label>A2</label>
    </ligand>
</feature>
<feature type="binding site" evidence="4">
    <location>
        <position position="204"/>
    </location>
    <ligand>
        <name>Cu cation</name>
        <dbReference type="ChEBI" id="CHEBI:23378"/>
        <label>A2</label>
    </ligand>
</feature>
<feature type="binding site" evidence="4">
    <location>
        <position position="207"/>
    </location>
    <ligand>
        <name>Cu cation</name>
        <dbReference type="ChEBI" id="CHEBI:23378"/>
        <label>A1</label>
    </ligand>
</feature>
<feature type="modified residue" description="Phosphotyrosine" evidence="2">
    <location>
        <position position="218"/>
    </location>
</feature>
<organism>
    <name type="scientific">Dacnomys millardi</name>
    <name type="common">Millard's rat</name>
    <name type="synonym">Large-toothed rat</name>
    <dbReference type="NCBI Taxonomy" id="332664"/>
    <lineage>
        <taxon>Eukaryota</taxon>
        <taxon>Metazoa</taxon>
        <taxon>Chordata</taxon>
        <taxon>Craniata</taxon>
        <taxon>Vertebrata</taxon>
        <taxon>Euteleostomi</taxon>
        <taxon>Mammalia</taxon>
        <taxon>Eutheria</taxon>
        <taxon>Euarchontoglires</taxon>
        <taxon>Glires</taxon>
        <taxon>Rodentia</taxon>
        <taxon>Myomorpha</taxon>
        <taxon>Muroidea</taxon>
        <taxon>Muridae</taxon>
        <taxon>Murinae</taxon>
        <taxon>Dacnomys</taxon>
    </lineage>
</organism>
<gene>
    <name type="primary">MT-CO2</name>
    <name type="synonym">COII</name>
    <name type="synonym">COX2</name>
    <name type="synonym">COXII</name>
    <name type="synonym">MTCO2</name>
</gene>
<dbReference type="EC" id="7.1.1.9"/>
<dbReference type="EMBL" id="DQ019098">
    <property type="protein sequence ID" value="ABA28386.1"/>
    <property type="molecule type" value="Genomic_DNA"/>
</dbReference>
<dbReference type="SMR" id="Q38S14"/>
<dbReference type="GO" id="GO:0005743">
    <property type="term" value="C:mitochondrial inner membrane"/>
    <property type="evidence" value="ECO:0007669"/>
    <property type="project" value="UniProtKB-SubCell"/>
</dbReference>
<dbReference type="GO" id="GO:0045277">
    <property type="term" value="C:respiratory chain complex IV"/>
    <property type="evidence" value="ECO:0000250"/>
    <property type="project" value="UniProtKB"/>
</dbReference>
<dbReference type="GO" id="GO:0005507">
    <property type="term" value="F:copper ion binding"/>
    <property type="evidence" value="ECO:0007669"/>
    <property type="project" value="InterPro"/>
</dbReference>
<dbReference type="GO" id="GO:0004129">
    <property type="term" value="F:cytochrome-c oxidase activity"/>
    <property type="evidence" value="ECO:0007669"/>
    <property type="project" value="UniProtKB-EC"/>
</dbReference>
<dbReference type="GO" id="GO:0042773">
    <property type="term" value="P:ATP synthesis coupled electron transport"/>
    <property type="evidence" value="ECO:0007669"/>
    <property type="project" value="TreeGrafter"/>
</dbReference>
<dbReference type="CDD" id="cd13912">
    <property type="entry name" value="CcO_II_C"/>
    <property type="match status" value="1"/>
</dbReference>
<dbReference type="FunFam" id="1.10.287.90:FF:000001">
    <property type="entry name" value="Cytochrome c oxidase subunit 2"/>
    <property type="match status" value="1"/>
</dbReference>
<dbReference type="FunFam" id="2.60.40.420:FF:000001">
    <property type="entry name" value="Cytochrome c oxidase subunit 2"/>
    <property type="match status" value="1"/>
</dbReference>
<dbReference type="Gene3D" id="1.10.287.90">
    <property type="match status" value="1"/>
</dbReference>
<dbReference type="Gene3D" id="2.60.40.420">
    <property type="entry name" value="Cupredoxins - blue copper proteins"/>
    <property type="match status" value="1"/>
</dbReference>
<dbReference type="InterPro" id="IPR045187">
    <property type="entry name" value="CcO_II"/>
</dbReference>
<dbReference type="InterPro" id="IPR002429">
    <property type="entry name" value="CcO_II-like_C"/>
</dbReference>
<dbReference type="InterPro" id="IPR034210">
    <property type="entry name" value="CcO_II_C"/>
</dbReference>
<dbReference type="InterPro" id="IPR001505">
    <property type="entry name" value="Copper_CuA"/>
</dbReference>
<dbReference type="InterPro" id="IPR008972">
    <property type="entry name" value="Cupredoxin"/>
</dbReference>
<dbReference type="InterPro" id="IPR014222">
    <property type="entry name" value="Cyt_c_oxidase_su2"/>
</dbReference>
<dbReference type="InterPro" id="IPR011759">
    <property type="entry name" value="Cyt_c_oxidase_su2_TM_dom"/>
</dbReference>
<dbReference type="InterPro" id="IPR036257">
    <property type="entry name" value="Cyt_c_oxidase_su2_TM_sf"/>
</dbReference>
<dbReference type="NCBIfam" id="TIGR02866">
    <property type="entry name" value="CoxB"/>
    <property type="match status" value="1"/>
</dbReference>
<dbReference type="PANTHER" id="PTHR22888:SF9">
    <property type="entry name" value="CYTOCHROME C OXIDASE SUBUNIT 2"/>
    <property type="match status" value="1"/>
</dbReference>
<dbReference type="PANTHER" id="PTHR22888">
    <property type="entry name" value="CYTOCHROME C OXIDASE, SUBUNIT II"/>
    <property type="match status" value="1"/>
</dbReference>
<dbReference type="Pfam" id="PF00116">
    <property type="entry name" value="COX2"/>
    <property type="match status" value="1"/>
</dbReference>
<dbReference type="Pfam" id="PF02790">
    <property type="entry name" value="COX2_TM"/>
    <property type="match status" value="1"/>
</dbReference>
<dbReference type="PRINTS" id="PR01166">
    <property type="entry name" value="CYCOXIDASEII"/>
</dbReference>
<dbReference type="SUPFAM" id="SSF49503">
    <property type="entry name" value="Cupredoxins"/>
    <property type="match status" value="1"/>
</dbReference>
<dbReference type="SUPFAM" id="SSF81464">
    <property type="entry name" value="Cytochrome c oxidase subunit II-like, transmembrane region"/>
    <property type="match status" value="1"/>
</dbReference>
<dbReference type="PROSITE" id="PS00078">
    <property type="entry name" value="COX2"/>
    <property type="match status" value="1"/>
</dbReference>
<dbReference type="PROSITE" id="PS50857">
    <property type="entry name" value="COX2_CUA"/>
    <property type="match status" value="1"/>
</dbReference>
<dbReference type="PROSITE" id="PS50999">
    <property type="entry name" value="COX2_TM"/>
    <property type="match status" value="1"/>
</dbReference>
<keyword id="KW-0186">Copper</keyword>
<keyword id="KW-0249">Electron transport</keyword>
<keyword id="KW-0460">Magnesium</keyword>
<keyword id="KW-0472">Membrane</keyword>
<keyword id="KW-0479">Metal-binding</keyword>
<keyword id="KW-0496">Mitochondrion</keyword>
<keyword id="KW-0999">Mitochondrion inner membrane</keyword>
<keyword id="KW-0597">Phosphoprotein</keyword>
<keyword id="KW-0679">Respiratory chain</keyword>
<keyword id="KW-1278">Translocase</keyword>
<keyword id="KW-0812">Transmembrane</keyword>
<keyword id="KW-1133">Transmembrane helix</keyword>
<keyword id="KW-0813">Transport</keyword>
<proteinExistence type="inferred from homology"/>
<geneLocation type="mitochondrion"/>
<name>COX2_DACMI</name>
<protein>
    <recommendedName>
        <fullName>Cytochrome c oxidase subunit 2</fullName>
        <ecNumber>7.1.1.9</ecNumber>
    </recommendedName>
    <alternativeName>
        <fullName>Cytochrome c oxidase polypeptide II</fullName>
    </alternativeName>
</protein>
<reference key="1">
    <citation type="journal article" date="2005" name="Mol. Phylogenet. Evol.">
        <title>Multigene phylogeny of the Old World mice, Murinae, reveals distinct geographic lineages and the declining utility of mitochondrial genes compared to nuclear genes.</title>
        <authorList>
            <person name="Steppan S.J."/>
            <person name="Adkins R.M."/>
            <person name="Spinks P.Q."/>
            <person name="Hale C."/>
        </authorList>
    </citation>
    <scope>NUCLEOTIDE SEQUENCE [GENOMIC DNA]</scope>
</reference>
<accession>Q38S14</accession>
<evidence type="ECO:0000250" key="1">
    <source>
        <dbReference type="UniProtKB" id="P00403"/>
    </source>
</evidence>
<evidence type="ECO:0000250" key="2">
    <source>
        <dbReference type="UniProtKB" id="P00406"/>
    </source>
</evidence>
<evidence type="ECO:0000250" key="3">
    <source>
        <dbReference type="UniProtKB" id="P00410"/>
    </source>
</evidence>
<evidence type="ECO:0000250" key="4">
    <source>
        <dbReference type="UniProtKB" id="P68530"/>
    </source>
</evidence>
<evidence type="ECO:0000305" key="5"/>
<sequence length="227" mass="25914">MAYPFQLGLQDATSPIMEELTNFHDHTLMIVFLISSLVLYIISLMLTTKLTHTSTMDAQEVETIWTILPAVILILIALPSLRILYMMDEINNPVLTVKTMGHQWYWSYEYTDYEDLCFDSYMVPTNDLKPGELRLLEVDNRVVLPMELPIRMLISSEDVLHSWAVPSLGLKTDAIPGRLNQATVTSNRPGLFYGQCSEICGSNHSFMPIVLEMVPLKYFENWSASMI</sequence>
<comment type="function">
    <text evidence="3">Component of the cytochrome c oxidase, the last enzyme in the mitochondrial electron transport chain which drives oxidative phosphorylation. The respiratory chain contains 3 multisubunit complexes succinate dehydrogenase (complex II, CII), ubiquinol-cytochrome c oxidoreductase (cytochrome b-c1 complex, complex III, CIII) and cytochrome c oxidase (complex IV, CIV), that cooperate to transfer electrons derived from NADH and succinate to molecular oxygen, creating an electrochemical gradient over the inner membrane that drives transmembrane transport and the ATP synthase. Cytochrome c oxidase is the component of the respiratory chain that catalyzes the reduction of oxygen to water. Electrons originating from reduced cytochrome c in the intermembrane space (IMS) are transferred via the dinuclear copper A center (CU(A)) of subunit 2 and heme A of subunit 1 to the active site in subunit 1, a binuclear center (BNC) formed by heme A3 and copper B (CU(B)). The BNC reduces molecular oxygen to 2 water molecules using 4 electrons from cytochrome c in the IMS and 4 protons from the mitochondrial matrix.</text>
</comment>
<comment type="catalytic activity">
    <reaction evidence="3">
        <text>4 Fe(II)-[cytochrome c] + O2 + 8 H(+)(in) = 4 Fe(III)-[cytochrome c] + 2 H2O + 4 H(+)(out)</text>
        <dbReference type="Rhea" id="RHEA:11436"/>
        <dbReference type="Rhea" id="RHEA-COMP:10350"/>
        <dbReference type="Rhea" id="RHEA-COMP:14399"/>
        <dbReference type="ChEBI" id="CHEBI:15377"/>
        <dbReference type="ChEBI" id="CHEBI:15378"/>
        <dbReference type="ChEBI" id="CHEBI:15379"/>
        <dbReference type="ChEBI" id="CHEBI:29033"/>
        <dbReference type="ChEBI" id="CHEBI:29034"/>
        <dbReference type="EC" id="7.1.1.9"/>
    </reaction>
    <physiologicalReaction direction="left-to-right" evidence="3">
        <dbReference type="Rhea" id="RHEA:11437"/>
    </physiologicalReaction>
</comment>
<comment type="cofactor">
    <cofactor evidence="4">
        <name>Cu cation</name>
        <dbReference type="ChEBI" id="CHEBI:23378"/>
    </cofactor>
    <text evidence="4">Binds a dinuclear copper A center per subunit.</text>
</comment>
<comment type="subunit">
    <text evidence="1 4">Component of the cytochrome c oxidase (complex IV, CIV), a multisubunit enzyme composed of 14 subunits. The complex is composed of a catalytic core of 3 subunits MT-CO1, MT-CO2 and MT-CO3, encoded in the mitochondrial DNA, and 11 supernumerary subunits COX4I, COX5A, COX5B, COX6A, COX6B, COX6C, COX7A, COX7B, COX7C, COX8 and NDUFA4, which are encoded in the nuclear genome. The complex exists as a monomer or a dimer and forms supercomplexes (SCs) in the inner mitochondrial membrane with NADH-ubiquinone oxidoreductase (complex I, CI) and ubiquinol-cytochrome c oxidoreductase (cytochrome b-c1 complex, complex III, CIII), resulting in different assemblies (supercomplex SCI(1)III(2)IV(1) and megacomplex MCI(2)III(2)IV(2)) (By similarity). Found in a complex with TMEM177, COA6, COX18, COX20, SCO1 and SCO2. Interacts with TMEM177 in a COX20-dependent manner. Interacts with COX20. Interacts with COX16 (By similarity).</text>
</comment>
<comment type="subcellular location">
    <subcellularLocation>
        <location evidence="4">Mitochondrion inner membrane</location>
        <topology evidence="4">Multi-pass membrane protein</topology>
    </subcellularLocation>
</comment>
<comment type="similarity">
    <text evidence="5">Belongs to the cytochrome c oxidase subunit 2 family.</text>
</comment>